<gene>
    <name type="ORF">IIV3-053L</name>
</gene>
<keyword id="KW-1185">Reference proteome</keyword>
<dbReference type="EMBL" id="DQ643392">
    <property type="protein sequence ID" value="ABF82083.1"/>
    <property type="molecule type" value="Genomic_DNA"/>
</dbReference>
<dbReference type="RefSeq" id="YP_654625.1">
    <property type="nucleotide sequence ID" value="NC_008187.1"/>
</dbReference>
<dbReference type="SMR" id="Q197A7"/>
<dbReference type="KEGG" id="vg:4156303"/>
<dbReference type="OrthoDB" id="22769at10239"/>
<dbReference type="Proteomes" id="UP000001358">
    <property type="component" value="Genome"/>
</dbReference>
<organism>
    <name type="scientific">Invertebrate iridescent virus 3</name>
    <name type="common">IIV-3</name>
    <name type="synonym">Mosquito iridescent virus</name>
    <dbReference type="NCBI Taxonomy" id="345201"/>
    <lineage>
        <taxon>Viruses</taxon>
        <taxon>Varidnaviria</taxon>
        <taxon>Bamfordvirae</taxon>
        <taxon>Nucleocytoviricota</taxon>
        <taxon>Megaviricetes</taxon>
        <taxon>Pimascovirales</taxon>
        <taxon>Iridoviridae</taxon>
        <taxon>Betairidovirinae</taxon>
        <taxon>Chloriridovirus</taxon>
    </lineage>
</organism>
<protein>
    <recommendedName>
        <fullName>Uncharacterized protein 053L</fullName>
    </recommendedName>
</protein>
<feature type="chain" id="PRO_0000377953" description="Uncharacterized protein 053L">
    <location>
        <begin position="1"/>
        <end position="142"/>
    </location>
</feature>
<reference key="1">
    <citation type="journal article" date="2006" name="J. Virol.">
        <title>Genome of invertebrate iridescent virus type 3 (mosquito iridescent virus).</title>
        <authorList>
            <person name="Delhon G."/>
            <person name="Tulman E.R."/>
            <person name="Afonso C.L."/>
            <person name="Lu Z."/>
            <person name="Becnel J.J."/>
            <person name="Moser B.A."/>
            <person name="Kutish G.F."/>
            <person name="Rock D.L."/>
        </authorList>
    </citation>
    <scope>NUCLEOTIDE SEQUENCE [LARGE SCALE GENOMIC DNA]</scope>
</reference>
<organismHost>
    <name type="scientific">Aedes vexans</name>
    <name type="common">Inland floodwater mosquito</name>
    <name type="synonym">Culex vexans</name>
    <dbReference type="NCBI Taxonomy" id="7163"/>
</organismHost>
<organismHost>
    <name type="scientific">Culex territans</name>
    <dbReference type="NCBI Taxonomy" id="42431"/>
</organismHost>
<organismHost>
    <name type="scientific">Culiseta annulata</name>
    <dbReference type="NCBI Taxonomy" id="332058"/>
</organismHost>
<organismHost>
    <name type="scientific">Ochlerotatus sollicitans</name>
    <name type="common">eastern saltmarsh mosquito</name>
    <dbReference type="NCBI Taxonomy" id="310513"/>
</organismHost>
<organismHost>
    <name type="scientific">Ochlerotatus taeniorhynchus</name>
    <name type="common">Black salt marsh mosquito</name>
    <name type="synonym">Aedes taeniorhynchus</name>
    <dbReference type="NCBI Taxonomy" id="329105"/>
</organismHost>
<organismHost>
    <name type="scientific">Psorophora ferox</name>
    <dbReference type="NCBI Taxonomy" id="7183"/>
</organismHost>
<accession>Q197A7</accession>
<proteinExistence type="predicted"/>
<name>053L_IIV3</name>
<sequence length="142" mass="16767">MEQYLQAFEFVEEMVVLPKYLSWELYHHLAVLLREKYPKTYKNKGYIFNIKVKSILDNRITPTGQIVLVVMFQSDLYVPQVGHVFTERIRVNSVDDRYQWITIEPLTVFLRSNIPYKPNTLVTVQICSIKMDNTLCFGTILD</sequence>